<gene>
    <name evidence="20" type="primary">CESA6</name>
    <name evidence="21" type="synonym">IXR2</name>
    <name evidence="23" type="synonym">PRC1</name>
    <name evidence="22" type="synonym">QUI</name>
    <name evidence="27" type="ordered locus">At5g64740</name>
    <name evidence="28" type="ORF">MVP7.7</name>
</gene>
<name>CESA6_ARATH</name>
<accession>Q94JQ6</accession>
<accession>O65338</accession>
<accession>Q0WNG4</accession>
<accession>Q9FGF9</accession>
<sequence length="1084" mass="122502">MNTGGRLIAGSHNRNEFVLINADENARIRSVQELSGQTCQICRDEIELTVDGEPFVACNECAFPVCRPCYEYERREGNQACPQCKTRFKRLKGSPRVEGDEEEDDIDDLDNEFEYGNNGIGFDQVSEGMSISRRNSGFPQSDLDSAPPGSQIPLLTYGDEDVEISSDRHALIVPPSLGGHGNRVHPVSLSDPTVAAHPRPMVPQKDLAVYGYGSVAWKDRMEEWKRKQNEKLQVVRHEGDPDFEDGDDADFPMMDEGRQPLSRKIPIKSSKINPYRMLIVLRLVILGLFFHYRILHPVKDAYALWLISVICEIWFAVSWVLDQFPKWYPIERETYLDRLSLRYEKEGKPSGLSPVDVFVSTVDPLKEPPLITANTVLSILAVDYPVDKVACYVSDDGAAMLTFEALSETAEFARKWVPFCKKYCIEPRAPEWYFCHKMDYLKNKVHPAFVRERRAMKRDYEEFKVKINALVATAQKVPEDGWTMQDGTPWPGNSVRDHPGMIQVFLGSDGVRDVENNELPRLVYVSREKRPGFDHHKKAGAMNSLIRVSGVLSNAPYLLNVDCDHYINNSKALREAMCFMMDPQSGKKICYVQFPQRFDGIDRHDRYSNRNVVFFDINMKGLDGLQGPIYVGTGCVFRRQALYGFDAPKKKKGPRKTCNCWPKWCLLCFGSRKNRKAKTVAADKKKKNREASKQIHALENIEEGRVTKGSNVEQSTEAMQMKLEKKFGQSPVFVASARMENGGMARNASPACLLKEAIQVISCGYEDKTEWGKEIGWIYGSVTEDILTGFKMHSHGWRSVYCTPKLAAFKGSAPINLSDRLHQVLRWALGSVEIFLSRHCPIWYGYGGGLKWLERLSYINSVVYPWTSLPLIVYCSLPAICLLTGKFIVPEISNYASILFMALFSSIAITGILEMQWGKVGIDDWWRNEQFWVIGGVSAHLFALFQGLLKVLAGVDTNFTVTSKAADDGEFSDLYLFKWTSLLIPPMTLLIINVIGVIVGVSDAISNGYDSWGPLFGRLFFALWVIIHLYPFLKGLLGKQDRMPTIIVVWSILLASILTLLWVRVNPFVAKGGPILEICGLDCL</sequence>
<protein>
    <recommendedName>
        <fullName evidence="20">Cellulose synthase A catalytic subunit 6 [UDP-forming]</fullName>
        <shortName evidence="20">AtCesA6</shortName>
        <ecNumber evidence="26">2.4.1.12</ecNumber>
    </recommendedName>
    <alternativeName>
        <fullName evidence="24">AraxCelA</fullName>
    </alternativeName>
    <alternativeName>
        <fullName evidence="21">Isoxaben-resistant protein 2</fullName>
    </alternativeName>
    <alternativeName>
        <fullName evidence="23">Protein PROCUSTE 1</fullName>
    </alternativeName>
    <alternativeName>
        <fullName evidence="22">Protein QUILL</fullName>
    </alternativeName>
</protein>
<evidence type="ECO:0000250" key="1">
    <source>
        <dbReference type="UniProtKB" id="O48946"/>
    </source>
</evidence>
<evidence type="ECO:0000250" key="2">
    <source>
        <dbReference type="UniProtKB" id="Q941L0"/>
    </source>
</evidence>
<evidence type="ECO:0000250" key="3">
    <source>
        <dbReference type="UniProtKB" id="Q9SWW6"/>
    </source>
</evidence>
<evidence type="ECO:0000255" key="4"/>
<evidence type="ECO:0000255" key="5">
    <source>
        <dbReference type="PROSITE-ProRule" id="PRU00175"/>
    </source>
</evidence>
<evidence type="ECO:0000255" key="6">
    <source>
        <dbReference type="PROSITE-ProRule" id="PRU00498"/>
    </source>
</evidence>
<evidence type="ECO:0000269" key="7">
    <source>
    </source>
</evidence>
<evidence type="ECO:0000269" key="8">
    <source>
    </source>
</evidence>
<evidence type="ECO:0000269" key="9">
    <source>
    </source>
</evidence>
<evidence type="ECO:0000269" key="10">
    <source>
    </source>
</evidence>
<evidence type="ECO:0000269" key="11">
    <source>
    </source>
</evidence>
<evidence type="ECO:0000269" key="12">
    <source>
    </source>
</evidence>
<evidence type="ECO:0000269" key="13">
    <source>
    </source>
</evidence>
<evidence type="ECO:0000269" key="14">
    <source>
    </source>
</evidence>
<evidence type="ECO:0000269" key="15">
    <source>
    </source>
</evidence>
<evidence type="ECO:0000269" key="16">
    <source>
    </source>
</evidence>
<evidence type="ECO:0000269" key="17">
    <source>
    </source>
</evidence>
<evidence type="ECO:0000269" key="18">
    <source>
    </source>
</evidence>
<evidence type="ECO:0000269" key="19">
    <source>
    </source>
</evidence>
<evidence type="ECO:0000303" key="20">
    <source>
    </source>
</evidence>
<evidence type="ECO:0000303" key="21">
    <source>
    </source>
</evidence>
<evidence type="ECO:0000303" key="22">
    <source>
    </source>
</evidence>
<evidence type="ECO:0000303" key="23">
    <source>
    </source>
</evidence>
<evidence type="ECO:0000303" key="24">
    <source ref="4"/>
</evidence>
<evidence type="ECO:0000305" key="25"/>
<evidence type="ECO:0000305" key="26">
    <source>
    </source>
</evidence>
<evidence type="ECO:0000312" key="27">
    <source>
        <dbReference type="Araport" id="AT5G64740"/>
    </source>
</evidence>
<evidence type="ECO:0000312" key="28">
    <source>
        <dbReference type="EMBL" id="BAB10307.1"/>
    </source>
</evidence>
<dbReference type="EC" id="2.4.1.12" evidence="26"/>
<dbReference type="EMBL" id="AB025637">
    <property type="protein sequence ID" value="BAB10307.1"/>
    <property type="molecule type" value="Genomic_DNA"/>
</dbReference>
<dbReference type="EMBL" id="CP002688">
    <property type="protein sequence ID" value="AED97945.1"/>
    <property type="molecule type" value="Genomic_DNA"/>
</dbReference>
<dbReference type="EMBL" id="AK229477">
    <property type="protein sequence ID" value="BAF01335.1"/>
    <property type="molecule type" value="mRNA"/>
</dbReference>
<dbReference type="EMBL" id="AF062485">
    <property type="protein sequence ID" value="AAC29067.1"/>
    <property type="status" value="ALT_INIT"/>
    <property type="molecule type" value="mRNA"/>
</dbReference>
<dbReference type="EMBL" id="AF375439">
    <property type="protein sequence ID" value="AAK53023.1"/>
    <property type="status" value="ALT_FRAME"/>
    <property type="molecule type" value="mRNA"/>
</dbReference>
<dbReference type="EMBL" id="AY143957">
    <property type="protein sequence ID" value="AAN28896.1"/>
    <property type="molecule type" value="mRNA"/>
</dbReference>
<dbReference type="PIR" id="T52028">
    <property type="entry name" value="T52028"/>
</dbReference>
<dbReference type="RefSeq" id="NP_201279.1">
    <property type="nucleotide sequence ID" value="NM_125870.3"/>
</dbReference>
<dbReference type="SMR" id="Q94JQ6"/>
<dbReference type="BioGRID" id="21837">
    <property type="interactions" value="50"/>
</dbReference>
<dbReference type="DIP" id="DIP-46438N"/>
<dbReference type="FunCoup" id="Q94JQ6">
    <property type="interactions" value="273"/>
</dbReference>
<dbReference type="IntAct" id="Q94JQ6">
    <property type="interactions" value="3"/>
</dbReference>
<dbReference type="STRING" id="3702.Q94JQ6"/>
<dbReference type="CAZy" id="GT2">
    <property type="family name" value="Glycosyltransferase Family 2"/>
</dbReference>
<dbReference type="TCDB" id="4.D.3.1.4">
    <property type="family name" value="the glycan glucosyl transferase (opgh) family"/>
</dbReference>
<dbReference type="GlyCosmos" id="Q94JQ6">
    <property type="glycosylation" value="1 site, No reported glycans"/>
</dbReference>
<dbReference type="GlyGen" id="Q94JQ6">
    <property type="glycosylation" value="1 site"/>
</dbReference>
<dbReference type="iPTMnet" id="Q94JQ6"/>
<dbReference type="SwissPalm" id="Q94JQ6"/>
<dbReference type="PaxDb" id="3702-AT5G64740.1"/>
<dbReference type="ProteomicsDB" id="223952"/>
<dbReference type="EnsemblPlants" id="AT5G64740.1">
    <property type="protein sequence ID" value="AT5G64740.1"/>
    <property type="gene ID" value="AT5G64740"/>
</dbReference>
<dbReference type="GeneID" id="836595"/>
<dbReference type="Gramene" id="AT5G64740.1">
    <property type="protein sequence ID" value="AT5G64740.1"/>
    <property type="gene ID" value="AT5G64740"/>
</dbReference>
<dbReference type="KEGG" id="ath:AT5G64740"/>
<dbReference type="Araport" id="AT5G64740"/>
<dbReference type="TAIR" id="AT5G64740">
    <property type="gene designation" value="CESA6"/>
</dbReference>
<dbReference type="eggNOG" id="ENOG502QQGG">
    <property type="taxonomic scope" value="Eukaryota"/>
</dbReference>
<dbReference type="HOGENOM" id="CLU_001418_0_2_1"/>
<dbReference type="InParanoid" id="Q94JQ6"/>
<dbReference type="OMA" id="VAWKNRI"/>
<dbReference type="OrthoDB" id="1037065at2759"/>
<dbReference type="PhylomeDB" id="Q94JQ6"/>
<dbReference type="BioCyc" id="MetaCyc:MONOMER-2363"/>
<dbReference type="BRENDA" id="2.4.1.12">
    <property type="organism ID" value="399"/>
</dbReference>
<dbReference type="UniPathway" id="UPA00695"/>
<dbReference type="PRO" id="PR:Q94JQ6"/>
<dbReference type="Proteomes" id="UP000006548">
    <property type="component" value="Chromosome 5"/>
</dbReference>
<dbReference type="ExpressionAtlas" id="Q94JQ6">
    <property type="expression patterns" value="baseline and differential"/>
</dbReference>
<dbReference type="GO" id="GO:0010330">
    <property type="term" value="C:cellulose synthase complex"/>
    <property type="evidence" value="ECO:0000303"/>
    <property type="project" value="TAIR"/>
</dbReference>
<dbReference type="GO" id="GO:0005794">
    <property type="term" value="C:Golgi apparatus"/>
    <property type="evidence" value="ECO:0000314"/>
    <property type="project" value="TAIR"/>
</dbReference>
<dbReference type="GO" id="GO:0005886">
    <property type="term" value="C:plasma membrane"/>
    <property type="evidence" value="ECO:0000314"/>
    <property type="project" value="UniProtKB"/>
</dbReference>
<dbReference type="GO" id="GO:0016760">
    <property type="term" value="F:cellulose synthase (UDP-forming) activity"/>
    <property type="evidence" value="ECO:0007669"/>
    <property type="project" value="UniProtKB-EC"/>
</dbReference>
<dbReference type="GO" id="GO:0008270">
    <property type="term" value="F:zinc ion binding"/>
    <property type="evidence" value="ECO:0007669"/>
    <property type="project" value="UniProtKB-KW"/>
</dbReference>
<dbReference type="GO" id="GO:0071555">
    <property type="term" value="P:cell wall organization"/>
    <property type="evidence" value="ECO:0007669"/>
    <property type="project" value="UniProtKB-KW"/>
</dbReference>
<dbReference type="GO" id="GO:0030244">
    <property type="term" value="P:cellulose biosynthetic process"/>
    <property type="evidence" value="ECO:0000315"/>
    <property type="project" value="TAIR"/>
</dbReference>
<dbReference type="GO" id="GO:0043622">
    <property type="term" value="P:cortical microtubule organization"/>
    <property type="evidence" value="ECO:0000315"/>
    <property type="project" value="TAIR"/>
</dbReference>
<dbReference type="GO" id="GO:0009825">
    <property type="term" value="P:multidimensional cell growth"/>
    <property type="evidence" value="ECO:0000315"/>
    <property type="project" value="TAIR"/>
</dbReference>
<dbReference type="GO" id="GO:0009833">
    <property type="term" value="P:plant-type primary cell wall biogenesis"/>
    <property type="evidence" value="ECO:0000315"/>
    <property type="project" value="TAIR"/>
</dbReference>
<dbReference type="CDD" id="cd16617">
    <property type="entry name" value="mRING-HC-C4C4_CesA"/>
    <property type="match status" value="1"/>
</dbReference>
<dbReference type="FunFam" id="3.30.40.10:FF:000031">
    <property type="entry name" value="Cellulose synthase"/>
    <property type="match status" value="1"/>
</dbReference>
<dbReference type="FunFam" id="3.90.550.10:FF:000009">
    <property type="entry name" value="Cellulose synthase"/>
    <property type="match status" value="1"/>
</dbReference>
<dbReference type="Gene3D" id="3.90.550.10">
    <property type="entry name" value="Spore Coat Polysaccharide Biosynthesis Protein SpsA, Chain A"/>
    <property type="match status" value="1"/>
</dbReference>
<dbReference type="Gene3D" id="3.30.40.10">
    <property type="entry name" value="Zinc/RING finger domain, C3HC4 (zinc finger)"/>
    <property type="match status" value="1"/>
</dbReference>
<dbReference type="InterPro" id="IPR005150">
    <property type="entry name" value="Cellulose_synth"/>
</dbReference>
<dbReference type="InterPro" id="IPR027934">
    <property type="entry name" value="CES_Znf_RING"/>
</dbReference>
<dbReference type="InterPro" id="IPR029044">
    <property type="entry name" value="Nucleotide-diphossugar_trans"/>
</dbReference>
<dbReference type="InterPro" id="IPR001841">
    <property type="entry name" value="Znf_RING"/>
</dbReference>
<dbReference type="InterPro" id="IPR013083">
    <property type="entry name" value="Znf_RING/FYVE/PHD"/>
</dbReference>
<dbReference type="PANTHER" id="PTHR13301">
    <property type="entry name" value="X-BOX TRANSCRIPTION FACTOR-RELATED"/>
    <property type="match status" value="1"/>
</dbReference>
<dbReference type="Pfam" id="PF03552">
    <property type="entry name" value="Cellulose_synt"/>
    <property type="match status" value="1"/>
</dbReference>
<dbReference type="Pfam" id="PF14569">
    <property type="entry name" value="zf-UDP"/>
    <property type="match status" value="1"/>
</dbReference>
<dbReference type="SUPFAM" id="SSF53448">
    <property type="entry name" value="Nucleotide-diphospho-sugar transferases"/>
    <property type="match status" value="1"/>
</dbReference>
<dbReference type="SUPFAM" id="SSF57850">
    <property type="entry name" value="RING/U-box"/>
    <property type="match status" value="1"/>
</dbReference>
<dbReference type="PROSITE" id="PS50089">
    <property type="entry name" value="ZF_RING_2"/>
    <property type="match status" value="1"/>
</dbReference>
<feature type="chain" id="PRO_0000166372" description="Cellulose synthase A catalytic subunit 6 [UDP-forming]">
    <location>
        <begin position="1"/>
        <end position="1084"/>
    </location>
</feature>
<feature type="topological domain" description="Cytoplasmic" evidence="4">
    <location>
        <begin position="1"/>
        <end position="277"/>
    </location>
</feature>
<feature type="transmembrane region" description="Helical" evidence="4">
    <location>
        <begin position="278"/>
        <end position="298"/>
    </location>
</feature>
<feature type="topological domain" description="Extracellular" evidence="4">
    <location>
        <begin position="299"/>
        <end position="300"/>
    </location>
</feature>
<feature type="transmembrane region" description="Helical" evidence="4">
    <location>
        <begin position="301"/>
        <end position="321"/>
    </location>
</feature>
<feature type="topological domain" description="Cytoplasmic" evidence="4">
    <location>
        <begin position="322"/>
        <end position="868"/>
    </location>
</feature>
<feature type="transmembrane region" description="Helical" evidence="4">
    <location>
        <begin position="869"/>
        <end position="889"/>
    </location>
</feature>
<feature type="topological domain" description="Extracellular" evidence="4">
    <location>
        <begin position="890"/>
        <end position="894"/>
    </location>
</feature>
<feature type="transmembrane region" description="Helical" evidence="4">
    <location>
        <begin position="895"/>
        <end position="915"/>
    </location>
</feature>
<feature type="topological domain" description="Cytoplasmic" evidence="4">
    <location>
        <begin position="916"/>
        <end position="930"/>
    </location>
</feature>
<feature type="transmembrane region" description="Helical" evidence="4">
    <location>
        <begin position="931"/>
        <end position="951"/>
    </location>
</feature>
<feature type="topological domain" description="Extracellular" evidence="4">
    <location>
        <begin position="952"/>
        <end position="980"/>
    </location>
</feature>
<feature type="transmembrane region" description="Helical" evidence="4">
    <location>
        <begin position="981"/>
        <end position="1001"/>
    </location>
</feature>
<feature type="topological domain" description="Cytoplasmic" evidence="4">
    <location>
        <begin position="1002"/>
        <end position="1012"/>
    </location>
</feature>
<feature type="transmembrane region" description="Helical" evidence="4">
    <location>
        <begin position="1013"/>
        <end position="1033"/>
    </location>
</feature>
<feature type="topological domain" description="Extracellular" evidence="4">
    <location>
        <begin position="1034"/>
        <end position="1042"/>
    </location>
</feature>
<feature type="transmembrane region" description="Helical" evidence="4">
    <location>
        <begin position="1043"/>
        <end position="1063"/>
    </location>
</feature>
<feature type="topological domain" description="Cytoplasmic" evidence="4">
    <location>
        <begin position="1064"/>
        <end position="1084"/>
    </location>
</feature>
<feature type="zinc finger region" description="RING-type; degenerate" evidence="5">
    <location>
        <begin position="39"/>
        <end position="85"/>
    </location>
</feature>
<feature type="coiled-coil region" evidence="4">
    <location>
        <begin position="450"/>
        <end position="476"/>
    </location>
</feature>
<feature type="coiled-coil region" evidence="4">
    <location>
        <begin position="675"/>
        <end position="703"/>
    </location>
</feature>
<feature type="active site" evidence="4">
    <location>
        <position position="396"/>
    </location>
</feature>
<feature type="active site" evidence="4">
    <location>
        <position position="785"/>
    </location>
</feature>
<feature type="binding site" evidence="3">
    <location>
        <position position="39"/>
    </location>
    <ligand>
        <name>Zn(2+)</name>
        <dbReference type="ChEBI" id="CHEBI:29105"/>
        <label>1</label>
    </ligand>
</feature>
<feature type="binding site" evidence="3">
    <location>
        <position position="42"/>
    </location>
    <ligand>
        <name>Zn(2+)</name>
        <dbReference type="ChEBI" id="CHEBI:29105"/>
        <label>1</label>
    </ligand>
</feature>
<feature type="binding site" evidence="3">
    <location>
        <position position="58"/>
    </location>
    <ligand>
        <name>Zn(2+)</name>
        <dbReference type="ChEBI" id="CHEBI:29105"/>
        <label>2</label>
    </ligand>
</feature>
<feature type="binding site" evidence="3">
    <location>
        <position position="61"/>
    </location>
    <ligand>
        <name>Zn(2+)</name>
        <dbReference type="ChEBI" id="CHEBI:29105"/>
        <label>2</label>
    </ligand>
</feature>
<feature type="binding site" evidence="3">
    <location>
        <position position="66"/>
    </location>
    <ligand>
        <name>Zn(2+)</name>
        <dbReference type="ChEBI" id="CHEBI:29105"/>
        <label>1</label>
    </ligand>
</feature>
<feature type="binding site" evidence="3">
    <location>
        <position position="69"/>
    </location>
    <ligand>
        <name>Zn(2+)</name>
        <dbReference type="ChEBI" id="CHEBI:29105"/>
        <label>1</label>
    </ligand>
</feature>
<feature type="binding site" evidence="3">
    <location>
        <position position="81"/>
    </location>
    <ligand>
        <name>Zn(2+)</name>
        <dbReference type="ChEBI" id="CHEBI:29105"/>
        <label>2</label>
    </ligand>
</feature>
<feature type="binding site" evidence="3">
    <location>
        <position position="84"/>
    </location>
    <ligand>
        <name>Zn(2+)</name>
        <dbReference type="ChEBI" id="CHEBI:29105"/>
        <label>2</label>
    </ligand>
</feature>
<feature type="binding site" evidence="2">
    <location>
        <position position="360"/>
    </location>
    <ligand>
        <name>UDP-alpha-D-glucose</name>
        <dbReference type="ChEBI" id="CHEBI:58885"/>
    </ligand>
</feature>
<feature type="binding site" evidence="2">
    <location>
        <position position="366"/>
    </location>
    <ligand>
        <name>UDP-alpha-D-glucose</name>
        <dbReference type="ChEBI" id="CHEBI:58885"/>
    </ligand>
</feature>
<feature type="binding site" evidence="2">
    <location>
        <position position="367"/>
    </location>
    <ligand>
        <name>UDP-alpha-D-glucose</name>
        <dbReference type="ChEBI" id="CHEBI:58885"/>
    </ligand>
</feature>
<feature type="binding site" evidence="2">
    <location>
        <position position="396"/>
    </location>
    <ligand>
        <name>UDP-alpha-D-glucose</name>
        <dbReference type="ChEBI" id="CHEBI:58885"/>
    </ligand>
</feature>
<feature type="binding site" evidence="2">
    <location>
        <position position="537"/>
    </location>
    <ligand>
        <name>UDP-alpha-D-glucose</name>
        <dbReference type="ChEBI" id="CHEBI:58885"/>
    </ligand>
</feature>
<feature type="binding site" evidence="2">
    <location>
        <position position="538"/>
    </location>
    <ligand>
        <name>Mn(2+)</name>
        <dbReference type="ChEBI" id="CHEBI:29035"/>
    </ligand>
</feature>
<feature type="binding site" evidence="2">
    <location>
        <position position="562"/>
    </location>
    <ligand>
        <name>Mn(2+)</name>
        <dbReference type="ChEBI" id="CHEBI:29035"/>
    </ligand>
</feature>
<feature type="modified residue" description="N-acetylmethionine" evidence="1">
    <location>
        <position position="1"/>
    </location>
</feature>
<feature type="glycosylation site" description="N-linked (GlcNAc...) asparagine" evidence="6">
    <location>
        <position position="958"/>
    </location>
</feature>
<feature type="mutagenesis site" description="In ixr2-1; confers resistance to the herbicide isoxaben. Can complement prc1." evidence="8">
    <original>R</original>
    <variation>W</variation>
    <location>
        <position position="1064"/>
    </location>
</feature>
<feature type="sequence conflict" description="In Ref. 4; AAC29067." evidence="25" ref="4">
    <original>P</original>
    <variation>R</variation>
    <location>
        <position position="198"/>
    </location>
</feature>
<feature type="sequence conflict" description="In Ref. 4; AAC29067." evidence="25" ref="4">
    <original>P</original>
    <variation>L</variation>
    <location>
        <position position="200"/>
    </location>
</feature>
<feature type="sequence conflict" description="In Ref. 4; AAC29067." evidence="25" ref="4">
    <original>R</original>
    <variation>M</variation>
    <location>
        <position position="263"/>
    </location>
</feature>
<feature type="sequence conflict" description="In Ref. 4; AAC29067." evidence="25" ref="4">
    <original>VTKGS</original>
    <variation>GHKVL</variation>
    <location>
        <begin position="706"/>
        <end position="710"/>
    </location>
</feature>
<feature type="sequence conflict" description="In Ref. 4; AAC29067." evidence="25" ref="4">
    <original>E</original>
    <variation>Q</variation>
    <location>
        <position position="724"/>
    </location>
</feature>
<feature type="sequence conflict" description="In Ref. 4; AAC29067." evidence="25" ref="4">
    <original>F</original>
    <variation>Y</variation>
    <location>
        <position position="727"/>
    </location>
</feature>
<feature type="sequence conflict" description="In Ref. 4; AAC29067." evidence="25" ref="4">
    <original>M</original>
    <variation>L</variation>
    <location>
        <position position="739"/>
    </location>
</feature>
<feature type="sequence conflict" description="In Ref. 4; AAC29067." evidence="25" ref="4">
    <original>C</original>
    <variation>R</variation>
    <location>
        <position position="763"/>
    </location>
</feature>
<feature type="sequence conflict" description="In Ref. 4; AAC29067." evidence="25" ref="4">
    <original>F</original>
    <variation>S</variation>
    <location>
        <position position="790"/>
    </location>
</feature>
<feature type="sequence conflict" description="In Ref. 4; AAC29067." evidence="25" ref="4">
    <original>S</original>
    <variation>H</variation>
    <location>
        <position position="799"/>
    </location>
</feature>
<feature type="sequence conflict" description="In Ref. 5; AAK53023/AAN28896." evidence="25" ref="5">
    <original>K</original>
    <variation>E</variation>
    <location>
        <position position="810"/>
    </location>
</feature>
<organism>
    <name type="scientific">Arabidopsis thaliana</name>
    <name type="common">Mouse-ear cress</name>
    <dbReference type="NCBI Taxonomy" id="3702"/>
    <lineage>
        <taxon>Eukaryota</taxon>
        <taxon>Viridiplantae</taxon>
        <taxon>Streptophyta</taxon>
        <taxon>Embryophyta</taxon>
        <taxon>Tracheophyta</taxon>
        <taxon>Spermatophyta</taxon>
        <taxon>Magnoliopsida</taxon>
        <taxon>eudicotyledons</taxon>
        <taxon>Gunneridae</taxon>
        <taxon>Pentapetalae</taxon>
        <taxon>rosids</taxon>
        <taxon>malvids</taxon>
        <taxon>Brassicales</taxon>
        <taxon>Brassicaceae</taxon>
        <taxon>Camelineae</taxon>
        <taxon>Arabidopsis</taxon>
    </lineage>
</organism>
<keyword id="KW-0007">Acetylation</keyword>
<keyword id="KW-1003">Cell membrane</keyword>
<keyword id="KW-0961">Cell wall biogenesis/degradation</keyword>
<keyword id="KW-0135">Cellulose biosynthesis</keyword>
<keyword id="KW-0175">Coiled coil</keyword>
<keyword id="KW-0325">Glycoprotein</keyword>
<keyword id="KW-0328">Glycosyltransferase</keyword>
<keyword id="KW-0449">Lipoprotein</keyword>
<keyword id="KW-0464">Manganese</keyword>
<keyword id="KW-0472">Membrane</keyword>
<keyword id="KW-0479">Metal-binding</keyword>
<keyword id="KW-1185">Reference proteome</keyword>
<keyword id="KW-0808">Transferase</keyword>
<keyword id="KW-0812">Transmembrane</keyword>
<keyword id="KW-1133">Transmembrane helix</keyword>
<keyword id="KW-0862">Zinc</keyword>
<keyword id="KW-0863">Zinc-finger</keyword>
<comment type="function">
    <text evidence="7 8 10 11 12 18 19">Catalytic subunit of cellulose synthase terminal complexes ('rosettes'), required for beta-1,4-glucan microfibril crystallization, a major mechanism of the cell wall formation. Involved in the primary cell wall formation. The presence of each protein CESA1 and CESA6 is critical for cell expansion. The hypocotyl elongation is based on a CESA6-dependent cell elongation in dark and a CESA6-independent cell elongation in light. The transition between these two mechanisms requires photosynthesis and PHYB, but not CRY1. The CESA6-dependent cell elongation seems to be independent of gibberellic acid, auxin and ethylene. May be involved in sensitivity to isoxaben. Associates with and moves along cortical microtubules for the process of cellulose deposition.</text>
</comment>
<comment type="catalytic activity">
    <reaction evidence="26">
        <text>[(1-&gt;4)-beta-D-glucosyl](n) + UDP-alpha-D-glucose = [(1-&gt;4)-beta-D-glucosyl](n+1) + UDP + H(+)</text>
        <dbReference type="Rhea" id="RHEA:19929"/>
        <dbReference type="Rhea" id="RHEA-COMP:10033"/>
        <dbReference type="Rhea" id="RHEA-COMP:10034"/>
        <dbReference type="ChEBI" id="CHEBI:15378"/>
        <dbReference type="ChEBI" id="CHEBI:18246"/>
        <dbReference type="ChEBI" id="CHEBI:58223"/>
        <dbReference type="ChEBI" id="CHEBI:58885"/>
        <dbReference type="EC" id="2.4.1.12"/>
    </reaction>
</comment>
<comment type="cofactor">
    <cofactor evidence="3">
        <name>Zn(2+)</name>
        <dbReference type="ChEBI" id="CHEBI:29105"/>
    </cofactor>
    <text evidence="3">Binds 2 Zn(2+) ions per subunit.</text>
</comment>
<comment type="cofactor">
    <cofactor evidence="2">
        <name>Mn(2+)</name>
        <dbReference type="ChEBI" id="CHEBI:29035"/>
    </cofactor>
</comment>
<comment type="pathway">
    <text>Glycan metabolism; plant cellulose biosynthesis.</text>
</comment>
<comment type="subunit">
    <text evidence="11 12 13 14 15 17">Interacts with CESA1 and CESA3. Interacts with STL1 and STL2, but not with GOT1 (PubMed:27277162). Binds to CSI1 and CSI3 (PubMed:20616083, PubMed:24368796). Interacts with PAT24/TIP1 (PubMed:35644016).</text>
</comment>
<comment type="interaction">
    <interactant intactId="EBI-15659159">
        <id>Q94JQ6</id>
    </interactant>
    <interactant intactId="EBI-4448240">
        <id>Q941L0</id>
        <label>CESA3</label>
    </interactant>
    <organismsDiffer>false</organismsDiffer>
    <experiments>2</experiments>
</comment>
<comment type="interaction">
    <interactant intactId="EBI-15659159">
        <id>Q94JQ6</id>
    </interactant>
    <interactant intactId="EBI-4430539">
        <id>F4IIM1</id>
        <label>CSI1</label>
    </interactant>
    <organismsDiffer>false</organismsDiffer>
    <experiments>2</experiments>
</comment>
<comment type="subcellular location">
    <subcellularLocation>
        <location evidence="13">Cell membrane</location>
        <topology evidence="4">Multi-pass membrane protein</topology>
    </subcellularLocation>
    <text evidence="13">Colocalizes with CSI1 in a dynamic way.</text>
</comment>
<comment type="tissue specificity">
    <text evidence="7 9">Expressed in germinating seeds, seedlings, roots, stems, leaves and flowers. Not present in mature flowers.</text>
</comment>
<comment type="developmental stage">
    <text evidence="7">Not found in embryos. Higher levels in tissues undergoing primary cell wall formation, and drop of expression when secondary wall synthesis takes place. High levels in developing seedlings and elongating stems, with a decrease at later growth stages.</text>
</comment>
<comment type="PTM">
    <text evidence="16">S-acylated.</text>
</comment>
<comment type="similarity">
    <text evidence="25">Belongs to the glycosyltransferase 2 family. Plant cellulose synthase subfamily.</text>
</comment>
<comment type="sequence caution" evidence="25">
    <conflict type="erroneous initiation">
        <sequence resource="EMBL-CDS" id="AAC29067"/>
    </conflict>
    <text>Truncated N-terminus.</text>
</comment>
<comment type="sequence caution" evidence="25">
    <conflict type="frameshift">
        <sequence resource="EMBL-CDS" id="AAK53023"/>
    </conflict>
</comment>
<proteinExistence type="evidence at protein level"/>
<reference key="1">
    <citation type="submission" date="1999-04" db="EMBL/GenBank/DDBJ databases">
        <title>Structural analysis of Arabidopsis thaliana chromosome 5. XI.</title>
        <authorList>
            <person name="Kaneko T."/>
            <person name="Katoh T."/>
            <person name="Asamizu E."/>
            <person name="Sato S."/>
            <person name="Nakamura Y."/>
            <person name="Kotani H."/>
            <person name="Tabata S."/>
        </authorList>
    </citation>
    <scope>NUCLEOTIDE SEQUENCE [LARGE SCALE GENOMIC DNA]</scope>
    <source>
        <strain>cv. Columbia</strain>
    </source>
</reference>
<reference key="2">
    <citation type="journal article" date="2017" name="Plant J.">
        <title>Araport11: a complete reannotation of the Arabidopsis thaliana reference genome.</title>
        <authorList>
            <person name="Cheng C.Y."/>
            <person name="Krishnakumar V."/>
            <person name="Chan A.P."/>
            <person name="Thibaud-Nissen F."/>
            <person name="Schobel S."/>
            <person name="Town C.D."/>
        </authorList>
    </citation>
    <scope>GENOME REANNOTATION</scope>
    <source>
        <strain>cv. Columbia</strain>
    </source>
</reference>
<reference key="3">
    <citation type="submission" date="2006-07" db="EMBL/GenBank/DDBJ databases">
        <title>Large-scale analysis of RIKEN Arabidopsis full-length (RAFL) cDNAs.</title>
        <authorList>
            <person name="Totoki Y."/>
            <person name="Seki M."/>
            <person name="Ishida J."/>
            <person name="Nakajima M."/>
            <person name="Enju A."/>
            <person name="Kamiya A."/>
            <person name="Narusaka M."/>
            <person name="Shin-i T."/>
            <person name="Nakagawa M."/>
            <person name="Sakamoto N."/>
            <person name="Oishi K."/>
            <person name="Kohara Y."/>
            <person name="Kobayashi M."/>
            <person name="Toyoda A."/>
            <person name="Sakaki Y."/>
            <person name="Sakurai T."/>
            <person name="Iida K."/>
            <person name="Akiyama K."/>
            <person name="Satou M."/>
            <person name="Toyoda T."/>
            <person name="Konagaya A."/>
            <person name="Carninci P."/>
            <person name="Kawai J."/>
            <person name="Hayashizaki Y."/>
            <person name="Shinozaki K."/>
        </authorList>
    </citation>
    <scope>NUCLEOTIDE SEQUENCE [LARGE SCALE MRNA] OF 1-771</scope>
    <source>
        <strain>cv. Columbia</strain>
    </source>
</reference>
<reference key="4">
    <citation type="online journal article" date="1998" name="Plant Gene Register">
        <title>AraxCelA, a new member of cellulose synthase gene family from Arabidopsis thaliana.</title>
        <authorList>
            <person name="Wu L."/>
            <person name="Joshi C.P."/>
            <person name="Chiang V.L."/>
        </authorList>
        <locator>PGR98-114</locator>
    </citation>
    <scope>NUCLEOTIDE SEQUENCE [MRNA] OF 6-1084</scope>
    <source>
        <strain>cv. Columbia</strain>
    </source>
</reference>
<reference key="5">
    <citation type="journal article" date="2003" name="Science">
        <title>Empirical analysis of transcriptional activity in the Arabidopsis genome.</title>
        <authorList>
            <person name="Yamada K."/>
            <person name="Lim J."/>
            <person name="Dale J.M."/>
            <person name="Chen H."/>
            <person name="Shinn P."/>
            <person name="Palm C.J."/>
            <person name="Southwick A.M."/>
            <person name="Wu H.C."/>
            <person name="Kim C.J."/>
            <person name="Nguyen M."/>
            <person name="Pham P.K."/>
            <person name="Cheuk R.F."/>
            <person name="Karlin-Newmann G."/>
            <person name="Liu S.X."/>
            <person name="Lam B."/>
            <person name="Sakano H."/>
            <person name="Wu T."/>
            <person name="Yu G."/>
            <person name="Miranda M."/>
            <person name="Quach H.L."/>
            <person name="Tripp M."/>
            <person name="Chang C.H."/>
            <person name="Lee J.M."/>
            <person name="Toriumi M.J."/>
            <person name="Chan M.M."/>
            <person name="Tang C.C."/>
            <person name="Onodera C.S."/>
            <person name="Deng J.M."/>
            <person name="Akiyama K."/>
            <person name="Ansari Y."/>
            <person name="Arakawa T."/>
            <person name="Banh J."/>
            <person name="Banno F."/>
            <person name="Bowser L."/>
            <person name="Brooks S.Y."/>
            <person name="Carninci P."/>
            <person name="Chao Q."/>
            <person name="Choy N."/>
            <person name="Enju A."/>
            <person name="Goldsmith A.D."/>
            <person name="Gurjal M."/>
            <person name="Hansen N.F."/>
            <person name="Hayashizaki Y."/>
            <person name="Johnson-Hopson C."/>
            <person name="Hsuan V.W."/>
            <person name="Iida K."/>
            <person name="Karnes M."/>
            <person name="Khan S."/>
            <person name="Koesema E."/>
            <person name="Ishida J."/>
            <person name="Jiang P.X."/>
            <person name="Jones T."/>
            <person name="Kawai J."/>
            <person name="Kamiya A."/>
            <person name="Meyers C."/>
            <person name="Nakajima M."/>
            <person name="Narusaka M."/>
            <person name="Seki M."/>
            <person name="Sakurai T."/>
            <person name="Satou M."/>
            <person name="Tamse R."/>
            <person name="Vaysberg M."/>
            <person name="Wallender E.K."/>
            <person name="Wong C."/>
            <person name="Yamamura Y."/>
            <person name="Yuan S."/>
            <person name="Shinozaki K."/>
            <person name="Davis R.W."/>
            <person name="Theologis A."/>
            <person name="Ecker J.R."/>
        </authorList>
    </citation>
    <scope>NUCLEOTIDE SEQUENCE [LARGE SCALE MRNA] OF 637-1084</scope>
    <source>
        <strain>cv. Columbia</strain>
    </source>
</reference>
<reference key="6">
    <citation type="journal article" date="1995" name="Development">
        <title>Conditional root expansion mutants of Arabidopsis.</title>
        <authorList>
            <person name="Hauser M.-T."/>
            <person name="Morikami A."/>
            <person name="Benfey P.N."/>
        </authorList>
    </citation>
    <scope>FUNCTION</scope>
</reference>
<reference key="7">
    <citation type="journal article" date="1996" name="Development">
        <title>Procuste1 mutants identify two distinct genetic pathways controlling hypocotyl cell elongation, respectively in dark- and light-grown Arabidopsis seedlings.</title>
        <authorList>
            <person name="Desnos T."/>
            <person name="Orbovic V."/>
            <person name="Bellini C."/>
            <person name="Kronenberger J."/>
            <person name="Caboche M."/>
            <person name="Traas J."/>
            <person name="Hoefte H."/>
        </authorList>
    </citation>
    <scope>FUNCTION</scope>
</reference>
<reference key="8">
    <citation type="journal article" date="2000" name="Genome Biol.">
        <title>Higher plant cellulose synthases.</title>
        <authorList>
            <person name="Richmond T."/>
        </authorList>
    </citation>
    <scope>GENE FAMILY</scope>
    <scope>NOMENCLATURE</scope>
</reference>
<reference key="9">
    <citation type="journal article" date="2000" name="Plant Cell">
        <title>PROCUSTE1 encodes a cellulose synthase required for normal cell elongation specifically in roots and dark-grown hypocotyls of Arabidopsis.</title>
        <authorList>
            <person name="Fagard M."/>
            <person name="Desnos T."/>
            <person name="Desprez T."/>
            <person name="Goubet F."/>
            <person name="Refregier G."/>
            <person name="Mouille G."/>
            <person name="McCann M."/>
            <person name="Rayon C."/>
            <person name="Vernhettes S."/>
            <person name="Hoefte H."/>
        </authorList>
    </citation>
    <scope>FUNCTION</scope>
    <scope>CATALYTIC ACTIVITY</scope>
    <scope>TISSUE SPECIFICITY</scope>
    <scope>DEVELOPMENTAL STAGE</scope>
</reference>
<reference key="10">
    <citation type="journal article" date="2002" name="Plant Physiol.">
        <title>Resistance against herbicide isoxaben and cellulose deficiency caused by distinct mutations in same cellulose synthase isoform CESA6.</title>
        <authorList>
            <person name="Desprez T."/>
            <person name="Vernhettes S."/>
            <person name="Fagard M."/>
            <person name="Refregier G."/>
            <person name="Desnos T."/>
            <person name="Aletti E."/>
            <person name="Py N."/>
            <person name="Pelletier S."/>
            <person name="Hoefte H."/>
        </authorList>
    </citation>
    <scope>FUNCTION</scope>
    <scope>MUTAGENESIS OF ARG-1064</scope>
</reference>
<reference key="11">
    <citation type="journal article" date="2002" name="Plant Physiol.">
        <title>Genetic complexity of cellulose synthase A gene function in Arabidopsis embryogenesis.</title>
        <authorList>
            <person name="Beeckman T."/>
            <person name="Przemeck G.K.H."/>
            <person name="Stamatiou G."/>
            <person name="Lau R."/>
            <person name="Terryn N."/>
            <person name="De Rycke R."/>
            <person name="Inze D."/>
            <person name="Berleth T."/>
        </authorList>
    </citation>
    <scope>TISSUE SPECIFICITY</scope>
</reference>
<reference key="12">
    <citation type="journal article" date="2006" name="Science">
        <title>Visualization of cellulose synthase demonstrates functional association with microtubules.</title>
        <authorList>
            <person name="Paredez A.R."/>
            <person name="Somerville C.R."/>
            <person name="Ehrhardt D.W."/>
        </authorList>
    </citation>
    <scope>FUNCTION</scope>
</reference>
<reference key="13">
    <citation type="journal article" date="2007" name="Proc. Natl. Acad. Sci. U.S.A.">
        <title>Genetic evidence for three unique components in primary cell-wall cellulose synthase complexes in Arabidopsis.</title>
        <authorList>
            <person name="Persson S."/>
            <person name="Paredez A."/>
            <person name="Carroll A."/>
            <person name="Palsdottir H."/>
            <person name="Doblin M."/>
            <person name="Poindexter P."/>
            <person name="Khitrov N."/>
            <person name="Auer M."/>
            <person name="Somerville C.R."/>
        </authorList>
    </citation>
    <scope>FUNCTION</scope>
    <scope>SUBUNIT</scope>
</reference>
<reference key="14">
    <citation type="journal article" date="2007" name="Proc. Natl. Acad. Sci. U.S.A.">
        <title>Organization of cellulose synthase complexes involved in primary cell wall synthesis in Arabidopsis thaliana.</title>
        <authorList>
            <person name="Desprez T."/>
            <person name="Juraniec M."/>
            <person name="Crowell E.F."/>
            <person name="Jouy H."/>
            <person name="Pochylova Z."/>
            <person name="Parcy F."/>
            <person name="Hoefte H."/>
            <person name="Gonneau M."/>
            <person name="Vernhettes S."/>
        </authorList>
    </citation>
    <scope>FUNCTION</scope>
    <scope>INTERACTION WITH CESA1 AND CESA3</scope>
</reference>
<reference key="15">
    <citation type="journal article" date="2010" name="Proc. Natl. Acad. Sci. U.S.A.">
        <title>Identification of a cellulose synthase-associated protein required for cellulose biosynthesis.</title>
        <authorList>
            <person name="Gu Y."/>
            <person name="Kaplinsky N."/>
            <person name="Bringmann M."/>
            <person name="Cobb A."/>
            <person name="Carroll A."/>
            <person name="Sampathkumar A."/>
            <person name="Baskin T.I."/>
            <person name="Persson S."/>
            <person name="Somerville C.R."/>
        </authorList>
    </citation>
    <scope>INTERACTION WITH CSI1</scope>
    <scope>SUBCELLULAR LOCATION</scope>
    <source>
        <strain>cv. Columbia</strain>
    </source>
</reference>
<reference key="16">
    <citation type="journal article" date="2013" name="Plant Cell">
        <title>Cellulose synthase INTERACTIVE3 regulates cellulose biosynthesis in both a microtubule-dependent and microtubule-independent manner in Arabidopsis.</title>
        <authorList>
            <person name="Lei L."/>
            <person name="Li S."/>
            <person name="Du J."/>
            <person name="Bashline L."/>
            <person name="Gu Y."/>
        </authorList>
    </citation>
    <scope>INTERACTION WITH CSI1 AND CSI3</scope>
</reference>
<reference key="17">
    <citation type="journal article" date="2016" name="Nat. Commun.">
        <title>Golgi-localized STELLO proteins regulate the assembly and trafficking of cellulose synthase complexes in Arabidopsis.</title>
        <authorList>
            <person name="Zhang Y."/>
            <person name="Nikolovski N."/>
            <person name="Sorieul M."/>
            <person name="Vellosillo T."/>
            <person name="McFarlane H.E."/>
            <person name="Dupree R."/>
            <person name="Kesten C."/>
            <person name="Schneider R."/>
            <person name="Driemeier C."/>
            <person name="Lathe R."/>
            <person name="Lampugnani E."/>
            <person name="Yu X."/>
            <person name="Ivakov A."/>
            <person name="Doblin M.S."/>
            <person name="Mortimer J.C."/>
            <person name="Brown S.P."/>
            <person name="Persson S."/>
            <person name="Dupree P."/>
        </authorList>
    </citation>
    <scope>INTERACTION WITH STL1 AND STL2</scope>
    <scope>LACK OF INTERACTION WITH GOT1</scope>
</reference>
<reference key="18">
    <citation type="journal article" date="2016" name="Science">
        <title>S-acylation of the cellulose synthase complex is essential for its plasma membrane localization.</title>
        <authorList>
            <person name="Kumar M."/>
            <person name="Wightman R."/>
            <person name="Atanassov I."/>
            <person name="Gupta A."/>
            <person name="Hurst C.H."/>
            <person name="Hemsley P.A."/>
            <person name="Turner S."/>
        </authorList>
    </citation>
    <scope>S-ACYLATION</scope>
</reference>
<reference key="19">
    <citation type="journal article" date="2022" name="Plant Mol. Biol.">
        <title>Tip growth defective1 interacts with cellulose synthase A3 to regulate cellulose biosynthesis in Arabidopsis.</title>
        <authorList>
            <person name="Zhang L."/>
            <person name="Thapa Magar M.S."/>
            <person name="Wang Y."/>
            <person name="Cheng Y."/>
        </authorList>
    </citation>
    <scope>INTERACTION WITH PAT24/TIP1</scope>
    <source>
        <strain>cv. Columbia</strain>
    </source>
</reference>